<dbReference type="EMBL" id="BA000016">
    <property type="protein sequence ID" value="BAB82081.1"/>
    <property type="molecule type" value="Genomic_DNA"/>
</dbReference>
<dbReference type="RefSeq" id="WP_003454231.1">
    <property type="nucleotide sequence ID" value="NC_003366.1"/>
</dbReference>
<dbReference type="SMR" id="Q8XHV1"/>
<dbReference type="STRING" id="195102.gene:10491692"/>
<dbReference type="GeneID" id="93001039"/>
<dbReference type="KEGG" id="cpe:CPE2375"/>
<dbReference type="HOGENOM" id="CLU_074407_2_2_9"/>
<dbReference type="Proteomes" id="UP000000818">
    <property type="component" value="Chromosome"/>
</dbReference>
<dbReference type="GO" id="GO:0022625">
    <property type="term" value="C:cytosolic large ribosomal subunit"/>
    <property type="evidence" value="ECO:0007669"/>
    <property type="project" value="TreeGrafter"/>
</dbReference>
<dbReference type="GO" id="GO:0003735">
    <property type="term" value="F:structural constituent of ribosome"/>
    <property type="evidence" value="ECO:0007669"/>
    <property type="project" value="InterPro"/>
</dbReference>
<dbReference type="GO" id="GO:0006412">
    <property type="term" value="P:translation"/>
    <property type="evidence" value="ECO:0007669"/>
    <property type="project" value="UniProtKB-UniRule"/>
</dbReference>
<dbReference type="FunFam" id="3.90.1030.10:FF:000002">
    <property type="entry name" value="50S ribosomal protein L17"/>
    <property type="match status" value="1"/>
</dbReference>
<dbReference type="Gene3D" id="3.90.1030.10">
    <property type="entry name" value="Ribosomal protein L17"/>
    <property type="match status" value="1"/>
</dbReference>
<dbReference type="HAMAP" id="MF_01368">
    <property type="entry name" value="Ribosomal_bL17"/>
    <property type="match status" value="1"/>
</dbReference>
<dbReference type="InterPro" id="IPR000456">
    <property type="entry name" value="Ribosomal_bL17"/>
</dbReference>
<dbReference type="InterPro" id="IPR047859">
    <property type="entry name" value="Ribosomal_bL17_CS"/>
</dbReference>
<dbReference type="InterPro" id="IPR036373">
    <property type="entry name" value="Ribosomal_bL17_sf"/>
</dbReference>
<dbReference type="NCBIfam" id="TIGR00059">
    <property type="entry name" value="L17"/>
    <property type="match status" value="1"/>
</dbReference>
<dbReference type="PANTHER" id="PTHR14413:SF16">
    <property type="entry name" value="LARGE RIBOSOMAL SUBUNIT PROTEIN BL17M"/>
    <property type="match status" value="1"/>
</dbReference>
<dbReference type="PANTHER" id="PTHR14413">
    <property type="entry name" value="RIBOSOMAL PROTEIN L17"/>
    <property type="match status" value="1"/>
</dbReference>
<dbReference type="Pfam" id="PF01196">
    <property type="entry name" value="Ribosomal_L17"/>
    <property type="match status" value="1"/>
</dbReference>
<dbReference type="SUPFAM" id="SSF64263">
    <property type="entry name" value="Prokaryotic ribosomal protein L17"/>
    <property type="match status" value="1"/>
</dbReference>
<dbReference type="PROSITE" id="PS01167">
    <property type="entry name" value="RIBOSOMAL_L17"/>
    <property type="match status" value="1"/>
</dbReference>
<name>RL17_CLOPE</name>
<feature type="chain" id="PRO_0000267857" description="Large ribosomal subunit protein bL17">
    <location>
        <begin position="1"/>
        <end position="113"/>
    </location>
</feature>
<keyword id="KW-1185">Reference proteome</keyword>
<keyword id="KW-0687">Ribonucleoprotein</keyword>
<keyword id="KW-0689">Ribosomal protein</keyword>
<gene>
    <name evidence="1" type="primary">rplQ</name>
    <name type="ordered locus">CPE2375</name>
</gene>
<sequence length="113" mass="12877">MAGYRKLGRPTDQRKAMLRNLVTSFLKHGKIETTETRAKETRSLAEKMITLAKRGDLHARRQVLAFVTEEEVVKNLFDNIAPKYAERNGGYTRMYKVGPRRGDGAEVVILELV</sequence>
<organism>
    <name type="scientific">Clostridium perfringens (strain 13 / Type A)</name>
    <dbReference type="NCBI Taxonomy" id="195102"/>
    <lineage>
        <taxon>Bacteria</taxon>
        <taxon>Bacillati</taxon>
        <taxon>Bacillota</taxon>
        <taxon>Clostridia</taxon>
        <taxon>Eubacteriales</taxon>
        <taxon>Clostridiaceae</taxon>
        <taxon>Clostridium</taxon>
    </lineage>
</organism>
<proteinExistence type="inferred from homology"/>
<evidence type="ECO:0000255" key="1">
    <source>
        <dbReference type="HAMAP-Rule" id="MF_01368"/>
    </source>
</evidence>
<evidence type="ECO:0000305" key="2"/>
<protein>
    <recommendedName>
        <fullName evidence="1">Large ribosomal subunit protein bL17</fullName>
    </recommendedName>
    <alternativeName>
        <fullName evidence="2">50S ribosomal protein L17</fullName>
    </alternativeName>
</protein>
<comment type="subunit">
    <text evidence="1">Part of the 50S ribosomal subunit. Contacts protein L32.</text>
</comment>
<comment type="similarity">
    <text evidence="1">Belongs to the bacterial ribosomal protein bL17 family.</text>
</comment>
<reference key="1">
    <citation type="journal article" date="2002" name="Proc. Natl. Acad. Sci. U.S.A.">
        <title>Complete genome sequence of Clostridium perfringens, an anaerobic flesh-eater.</title>
        <authorList>
            <person name="Shimizu T."/>
            <person name="Ohtani K."/>
            <person name="Hirakawa H."/>
            <person name="Ohshima K."/>
            <person name="Yamashita A."/>
            <person name="Shiba T."/>
            <person name="Ogasawara N."/>
            <person name="Hattori M."/>
            <person name="Kuhara S."/>
            <person name="Hayashi H."/>
        </authorList>
    </citation>
    <scope>NUCLEOTIDE SEQUENCE [LARGE SCALE GENOMIC DNA]</scope>
    <source>
        <strain>13 / Type A</strain>
    </source>
</reference>
<accession>Q8XHV1</accession>